<gene>
    <name type="primary">arlR</name>
    <name type="ordered locus">SAV1415</name>
</gene>
<reference key="1">
    <citation type="journal article" date="2001" name="Lancet">
        <title>Whole genome sequencing of meticillin-resistant Staphylococcus aureus.</title>
        <authorList>
            <person name="Kuroda M."/>
            <person name="Ohta T."/>
            <person name="Uchiyama I."/>
            <person name="Baba T."/>
            <person name="Yuzawa H."/>
            <person name="Kobayashi I."/>
            <person name="Cui L."/>
            <person name="Oguchi A."/>
            <person name="Aoki K."/>
            <person name="Nagai Y."/>
            <person name="Lian J.-Q."/>
            <person name="Ito T."/>
            <person name="Kanamori M."/>
            <person name="Matsumaru H."/>
            <person name="Maruyama A."/>
            <person name="Murakami H."/>
            <person name="Hosoyama A."/>
            <person name="Mizutani-Ui Y."/>
            <person name="Takahashi N.K."/>
            <person name="Sawano T."/>
            <person name="Inoue R."/>
            <person name="Kaito C."/>
            <person name="Sekimizu K."/>
            <person name="Hirakawa H."/>
            <person name="Kuhara S."/>
            <person name="Goto S."/>
            <person name="Yabuzaki J."/>
            <person name="Kanehisa M."/>
            <person name="Yamashita A."/>
            <person name="Oshima K."/>
            <person name="Furuya K."/>
            <person name="Yoshino C."/>
            <person name="Shiba T."/>
            <person name="Hattori M."/>
            <person name="Ogasawara N."/>
            <person name="Hayashi H."/>
            <person name="Hiramatsu K."/>
        </authorList>
    </citation>
    <scope>NUCLEOTIDE SEQUENCE [LARGE SCALE GENOMIC DNA]</scope>
    <source>
        <strain>Mu50 / ATCC 700699</strain>
    </source>
</reference>
<protein>
    <recommendedName>
        <fullName>Response regulator ArlR</fullName>
    </recommendedName>
</protein>
<name>ARLR_STAAM</name>
<feature type="chain" id="PRO_0000081015" description="Response regulator ArlR">
    <location>
        <begin position="1"/>
        <end position="219"/>
    </location>
</feature>
<feature type="domain" description="Response regulatory" evidence="2">
    <location>
        <begin position="3"/>
        <end position="116"/>
    </location>
</feature>
<feature type="DNA-binding region" description="OmpR/PhoB-type" evidence="3">
    <location>
        <begin position="122"/>
        <end position="219"/>
    </location>
</feature>
<feature type="modified residue" description="4-aspartylphosphate" evidence="2">
    <location>
        <position position="52"/>
    </location>
</feature>
<proteinExistence type="inferred from homology"/>
<organism>
    <name type="scientific">Staphylococcus aureus (strain Mu50 / ATCC 700699)</name>
    <dbReference type="NCBI Taxonomy" id="158878"/>
    <lineage>
        <taxon>Bacteria</taxon>
        <taxon>Bacillati</taxon>
        <taxon>Bacillota</taxon>
        <taxon>Bacilli</taxon>
        <taxon>Bacillales</taxon>
        <taxon>Staphylococcaceae</taxon>
        <taxon>Staphylococcus</taxon>
    </lineage>
</organism>
<sequence length="219" mass="25498">MTQILIVEDEQNLARFLELELTHENYNVDTEYDGQDGLDKALSHYYDLIILDLMLPSINGLEICRKIRQQQSTPIIIITAKSDTYDKVAGLDYGADDYIVKPFDIEELLARIRAILRRQPQKDIIDVNGITIDKNAFKVTVNGAEIELTKTEYDLLYLLAENKNHVMQREQILNHVWGYNSEVETNVVDVYIRYLRNKLKPYDRDKMIETVRGVGYVIR</sequence>
<comment type="function">
    <text evidence="1">Member of the two-component regulatory system ArlS/ArlR involved in the regulation of adhesion, autolysis, multidrug resistance and virulence.</text>
</comment>
<comment type="subcellular location">
    <subcellularLocation>
        <location evidence="1">Cytoplasm</location>
    </subcellularLocation>
</comment>
<comment type="PTM">
    <text evidence="1">Phosphorylated by ArlS.</text>
</comment>
<keyword id="KW-0010">Activator</keyword>
<keyword id="KW-0963">Cytoplasm</keyword>
<keyword id="KW-0238">DNA-binding</keyword>
<keyword id="KW-0597">Phosphoprotein</keyword>
<keyword id="KW-0678">Repressor</keyword>
<keyword id="KW-0804">Transcription</keyword>
<keyword id="KW-0805">Transcription regulation</keyword>
<keyword id="KW-0902">Two-component regulatory system</keyword>
<keyword id="KW-0843">Virulence</keyword>
<accession>P0C000</accession>
<dbReference type="EMBL" id="BA000017">
    <property type="protein sequence ID" value="BAB57577.1"/>
    <property type="molecule type" value="Genomic_DNA"/>
</dbReference>
<dbReference type="RefSeq" id="WP_000192137.1">
    <property type="nucleotide sequence ID" value="NC_002758.2"/>
</dbReference>
<dbReference type="SMR" id="P0C000"/>
<dbReference type="KEGG" id="sav:SAV1415"/>
<dbReference type="HOGENOM" id="CLU_000445_30_1_9"/>
<dbReference type="PhylomeDB" id="P0C000"/>
<dbReference type="Proteomes" id="UP000002481">
    <property type="component" value="Chromosome"/>
</dbReference>
<dbReference type="GO" id="GO:0005829">
    <property type="term" value="C:cytosol"/>
    <property type="evidence" value="ECO:0007669"/>
    <property type="project" value="TreeGrafter"/>
</dbReference>
<dbReference type="GO" id="GO:0032993">
    <property type="term" value="C:protein-DNA complex"/>
    <property type="evidence" value="ECO:0007669"/>
    <property type="project" value="TreeGrafter"/>
</dbReference>
<dbReference type="GO" id="GO:0000156">
    <property type="term" value="F:phosphorelay response regulator activity"/>
    <property type="evidence" value="ECO:0007669"/>
    <property type="project" value="TreeGrafter"/>
</dbReference>
<dbReference type="GO" id="GO:0000976">
    <property type="term" value="F:transcription cis-regulatory region binding"/>
    <property type="evidence" value="ECO:0007669"/>
    <property type="project" value="TreeGrafter"/>
</dbReference>
<dbReference type="GO" id="GO:0006355">
    <property type="term" value="P:regulation of DNA-templated transcription"/>
    <property type="evidence" value="ECO:0007669"/>
    <property type="project" value="InterPro"/>
</dbReference>
<dbReference type="CDD" id="cd00383">
    <property type="entry name" value="trans_reg_C"/>
    <property type="match status" value="1"/>
</dbReference>
<dbReference type="FunFam" id="3.40.50.2300:FF:000001">
    <property type="entry name" value="DNA-binding response regulator PhoB"/>
    <property type="match status" value="1"/>
</dbReference>
<dbReference type="FunFam" id="1.10.10.10:FF:000005">
    <property type="entry name" value="Two-component system response regulator"/>
    <property type="match status" value="1"/>
</dbReference>
<dbReference type="Gene3D" id="3.40.50.2300">
    <property type="match status" value="1"/>
</dbReference>
<dbReference type="Gene3D" id="6.10.250.690">
    <property type="match status" value="1"/>
</dbReference>
<dbReference type="Gene3D" id="1.10.10.10">
    <property type="entry name" value="Winged helix-like DNA-binding domain superfamily/Winged helix DNA-binding domain"/>
    <property type="match status" value="1"/>
</dbReference>
<dbReference type="InterPro" id="IPR011006">
    <property type="entry name" value="CheY-like_superfamily"/>
</dbReference>
<dbReference type="InterPro" id="IPR001867">
    <property type="entry name" value="OmpR/PhoB-type_DNA-bd"/>
</dbReference>
<dbReference type="InterPro" id="IPR016032">
    <property type="entry name" value="Sig_transdc_resp-reg_C-effctor"/>
</dbReference>
<dbReference type="InterPro" id="IPR001789">
    <property type="entry name" value="Sig_transdc_resp-reg_receiver"/>
</dbReference>
<dbReference type="InterPro" id="IPR039420">
    <property type="entry name" value="WalR-like"/>
</dbReference>
<dbReference type="InterPro" id="IPR036388">
    <property type="entry name" value="WH-like_DNA-bd_sf"/>
</dbReference>
<dbReference type="PANTHER" id="PTHR48111">
    <property type="entry name" value="REGULATOR OF RPOS"/>
    <property type="match status" value="1"/>
</dbReference>
<dbReference type="PANTHER" id="PTHR48111:SF22">
    <property type="entry name" value="REGULATOR OF RPOS"/>
    <property type="match status" value="1"/>
</dbReference>
<dbReference type="Pfam" id="PF00072">
    <property type="entry name" value="Response_reg"/>
    <property type="match status" value="1"/>
</dbReference>
<dbReference type="Pfam" id="PF00486">
    <property type="entry name" value="Trans_reg_C"/>
    <property type="match status" value="1"/>
</dbReference>
<dbReference type="SMART" id="SM00448">
    <property type="entry name" value="REC"/>
    <property type="match status" value="1"/>
</dbReference>
<dbReference type="SMART" id="SM00862">
    <property type="entry name" value="Trans_reg_C"/>
    <property type="match status" value="1"/>
</dbReference>
<dbReference type="SUPFAM" id="SSF46894">
    <property type="entry name" value="C-terminal effector domain of the bipartite response regulators"/>
    <property type="match status" value="1"/>
</dbReference>
<dbReference type="SUPFAM" id="SSF52172">
    <property type="entry name" value="CheY-like"/>
    <property type="match status" value="1"/>
</dbReference>
<dbReference type="PROSITE" id="PS51755">
    <property type="entry name" value="OMPR_PHOB"/>
    <property type="match status" value="1"/>
</dbReference>
<dbReference type="PROSITE" id="PS50110">
    <property type="entry name" value="RESPONSE_REGULATORY"/>
    <property type="match status" value="1"/>
</dbReference>
<evidence type="ECO:0000250" key="1"/>
<evidence type="ECO:0000255" key="2">
    <source>
        <dbReference type="PROSITE-ProRule" id="PRU00169"/>
    </source>
</evidence>
<evidence type="ECO:0000255" key="3">
    <source>
        <dbReference type="PROSITE-ProRule" id="PRU01091"/>
    </source>
</evidence>